<organism>
    <name type="scientific">Homo sapiens</name>
    <name type="common">Human</name>
    <dbReference type="NCBI Taxonomy" id="9606"/>
    <lineage>
        <taxon>Eukaryota</taxon>
        <taxon>Metazoa</taxon>
        <taxon>Chordata</taxon>
        <taxon>Craniata</taxon>
        <taxon>Vertebrata</taxon>
        <taxon>Euteleostomi</taxon>
        <taxon>Mammalia</taxon>
        <taxon>Eutheria</taxon>
        <taxon>Euarchontoglires</taxon>
        <taxon>Primates</taxon>
        <taxon>Haplorrhini</taxon>
        <taxon>Catarrhini</taxon>
        <taxon>Hominidae</taxon>
        <taxon>Homo</taxon>
    </lineage>
</organism>
<name>FMAS1_HUMAN</name>
<evidence type="ECO:0000256" key="1">
    <source>
        <dbReference type="SAM" id="MobiDB-lite"/>
    </source>
</evidence>
<evidence type="ECO:0000305" key="2"/>
<keyword id="KW-1185">Reference proteome</keyword>
<feature type="chain" id="PRO_0000343720" description="Putative uncharacterized protein FRMD6-AS1">
    <location>
        <begin position="1"/>
        <end position="363"/>
    </location>
</feature>
<feature type="region of interest" description="Disordered" evidence="1">
    <location>
        <begin position="35"/>
        <end position="262"/>
    </location>
</feature>
<feature type="compositionally biased region" description="Polar residues" evidence="1">
    <location>
        <begin position="56"/>
        <end position="75"/>
    </location>
</feature>
<feature type="compositionally biased region" description="Low complexity" evidence="1">
    <location>
        <begin position="100"/>
        <end position="116"/>
    </location>
</feature>
<feature type="sequence variant" id="VAR_044499" description="In dbSNP:rs11845396.">
    <original>G</original>
    <variation>R</variation>
    <location>
        <position position="115"/>
    </location>
</feature>
<sequence>MQLGRSGRRSQKQKHEVDEVYFTLTRVDRSCPYLTVPGPPGAESGAPVRLGLRQRAVSSSRNPNSAGRTPNSYLTQAPVWRRSAPAQPPAPQTRHFPGRGADPALGSLPAAGLSGLCARTTGGTAQPPGARDSGASPGAQPQRHRPGCRGPPGSPVIRGPPRCREPGTAHGAQTPPPTRPNWPRRQPSRGSCALSSRQYGERPPAPPWTQPSVPRRGAATWGQEKAEYATPLGTQEARRASGGRGGVDHGDQGLSPCCGDGGARGRRRLPTFWPSGLLRLRLDSLGALPPEPSRAGRGRLFGLSVVLLKRNAGGEATPREGGPRRRWLRESCSPLPARHSRRRASWVSRWMEGAPPRMPSLPL</sequence>
<reference key="1">
    <citation type="journal article" date="2003" name="Nature">
        <title>The DNA sequence and analysis of human chromosome 14.</title>
        <authorList>
            <person name="Heilig R."/>
            <person name="Eckenberg R."/>
            <person name="Petit J.-L."/>
            <person name="Fonknechten N."/>
            <person name="Da Silva C."/>
            <person name="Cattolico L."/>
            <person name="Levy M."/>
            <person name="Barbe V."/>
            <person name="De Berardinis V."/>
            <person name="Ureta-Vidal A."/>
            <person name="Pelletier E."/>
            <person name="Vico V."/>
            <person name="Anthouard V."/>
            <person name="Rowen L."/>
            <person name="Madan A."/>
            <person name="Qin S."/>
            <person name="Sun H."/>
            <person name="Du H."/>
            <person name="Pepin K."/>
            <person name="Artiguenave F."/>
            <person name="Robert C."/>
            <person name="Cruaud C."/>
            <person name="Bruels T."/>
            <person name="Jaillon O."/>
            <person name="Friedlander L."/>
            <person name="Samson G."/>
            <person name="Brottier P."/>
            <person name="Cure S."/>
            <person name="Segurens B."/>
            <person name="Aniere F."/>
            <person name="Samain S."/>
            <person name="Crespeau H."/>
            <person name="Abbasi N."/>
            <person name="Aiach N."/>
            <person name="Boscus D."/>
            <person name="Dickhoff R."/>
            <person name="Dors M."/>
            <person name="Dubois I."/>
            <person name="Friedman C."/>
            <person name="Gouyvenoux M."/>
            <person name="James R."/>
            <person name="Madan A."/>
            <person name="Mairey-Estrada B."/>
            <person name="Mangenot S."/>
            <person name="Martins N."/>
            <person name="Menard M."/>
            <person name="Oztas S."/>
            <person name="Ratcliffe A."/>
            <person name="Shaffer T."/>
            <person name="Trask B."/>
            <person name="Vacherie B."/>
            <person name="Bellemere C."/>
            <person name="Belser C."/>
            <person name="Besnard-Gonnet M."/>
            <person name="Bartol-Mavel D."/>
            <person name="Boutard M."/>
            <person name="Briez-Silla S."/>
            <person name="Combette S."/>
            <person name="Dufosse-Laurent V."/>
            <person name="Ferron C."/>
            <person name="Lechaplais C."/>
            <person name="Louesse C."/>
            <person name="Muselet D."/>
            <person name="Magdelenat G."/>
            <person name="Pateau E."/>
            <person name="Petit E."/>
            <person name="Sirvain-Trukniewicz P."/>
            <person name="Trybou A."/>
            <person name="Vega-Czarny N."/>
            <person name="Bataille E."/>
            <person name="Bluet E."/>
            <person name="Bordelais I."/>
            <person name="Dubois M."/>
            <person name="Dumont C."/>
            <person name="Guerin T."/>
            <person name="Haffray S."/>
            <person name="Hammadi R."/>
            <person name="Muanga J."/>
            <person name="Pellouin V."/>
            <person name="Robert D."/>
            <person name="Wunderle E."/>
            <person name="Gauguet G."/>
            <person name="Roy A."/>
            <person name="Sainte-Marthe L."/>
            <person name="Verdier J."/>
            <person name="Verdier-Discala C."/>
            <person name="Hillier L.W."/>
            <person name="Fulton L."/>
            <person name="McPherson J."/>
            <person name="Matsuda F."/>
            <person name="Wilson R."/>
            <person name="Scarpelli C."/>
            <person name="Gyapay G."/>
            <person name="Wincker P."/>
            <person name="Saurin W."/>
            <person name="Quetier F."/>
            <person name="Waterston R."/>
            <person name="Hood L."/>
            <person name="Weissenbach J."/>
        </authorList>
    </citation>
    <scope>NUCLEOTIDE SEQUENCE [LARGE SCALE GENOMIC DNA]</scope>
</reference>
<reference key="2">
    <citation type="journal article" date="2004" name="Nat. Genet.">
        <title>Complete sequencing and characterization of 21,243 full-length human cDNAs.</title>
        <authorList>
            <person name="Ota T."/>
            <person name="Suzuki Y."/>
            <person name="Nishikawa T."/>
            <person name="Otsuki T."/>
            <person name="Sugiyama T."/>
            <person name="Irie R."/>
            <person name="Wakamatsu A."/>
            <person name="Hayashi K."/>
            <person name="Sato H."/>
            <person name="Nagai K."/>
            <person name="Kimura K."/>
            <person name="Makita H."/>
            <person name="Sekine M."/>
            <person name="Obayashi M."/>
            <person name="Nishi T."/>
            <person name="Shibahara T."/>
            <person name="Tanaka T."/>
            <person name="Ishii S."/>
            <person name="Yamamoto J."/>
            <person name="Saito K."/>
            <person name="Kawai Y."/>
            <person name="Isono Y."/>
            <person name="Nakamura Y."/>
            <person name="Nagahari K."/>
            <person name="Murakami K."/>
            <person name="Yasuda T."/>
            <person name="Iwayanagi T."/>
            <person name="Wagatsuma M."/>
            <person name="Shiratori A."/>
            <person name="Sudo H."/>
            <person name="Hosoiri T."/>
            <person name="Kaku Y."/>
            <person name="Kodaira H."/>
            <person name="Kondo H."/>
            <person name="Sugawara M."/>
            <person name="Takahashi M."/>
            <person name="Kanda K."/>
            <person name="Yokoi T."/>
            <person name="Furuya T."/>
            <person name="Kikkawa E."/>
            <person name="Omura Y."/>
            <person name="Abe K."/>
            <person name="Kamihara K."/>
            <person name="Katsuta N."/>
            <person name="Sato K."/>
            <person name="Tanikawa M."/>
            <person name="Yamazaki M."/>
            <person name="Ninomiya K."/>
            <person name="Ishibashi T."/>
            <person name="Yamashita H."/>
            <person name="Murakawa K."/>
            <person name="Fujimori K."/>
            <person name="Tanai H."/>
            <person name="Kimata M."/>
            <person name="Watanabe M."/>
            <person name="Hiraoka S."/>
            <person name="Chiba Y."/>
            <person name="Ishida S."/>
            <person name="Ono Y."/>
            <person name="Takiguchi S."/>
            <person name="Watanabe S."/>
            <person name="Yosida M."/>
            <person name="Hotuta T."/>
            <person name="Kusano J."/>
            <person name="Kanehori K."/>
            <person name="Takahashi-Fujii A."/>
            <person name="Hara H."/>
            <person name="Tanase T.-O."/>
            <person name="Nomura Y."/>
            <person name="Togiya S."/>
            <person name="Komai F."/>
            <person name="Hara R."/>
            <person name="Takeuchi K."/>
            <person name="Arita M."/>
            <person name="Imose N."/>
            <person name="Musashino K."/>
            <person name="Yuuki H."/>
            <person name="Oshima A."/>
            <person name="Sasaki N."/>
            <person name="Aotsuka S."/>
            <person name="Yoshikawa Y."/>
            <person name="Matsunawa H."/>
            <person name="Ichihara T."/>
            <person name="Shiohata N."/>
            <person name="Sano S."/>
            <person name="Moriya S."/>
            <person name="Momiyama H."/>
            <person name="Satoh N."/>
            <person name="Takami S."/>
            <person name="Terashima Y."/>
            <person name="Suzuki O."/>
            <person name="Nakagawa S."/>
            <person name="Senoh A."/>
            <person name="Mizoguchi H."/>
            <person name="Goto Y."/>
            <person name="Shimizu F."/>
            <person name="Wakebe H."/>
            <person name="Hishigaki H."/>
            <person name="Watanabe T."/>
            <person name="Sugiyama A."/>
            <person name="Takemoto M."/>
            <person name="Kawakami B."/>
            <person name="Yamazaki M."/>
            <person name="Watanabe K."/>
            <person name="Kumagai A."/>
            <person name="Itakura S."/>
            <person name="Fukuzumi Y."/>
            <person name="Fujimori Y."/>
            <person name="Komiyama M."/>
            <person name="Tashiro H."/>
            <person name="Tanigami A."/>
            <person name="Fujiwara T."/>
            <person name="Ono T."/>
            <person name="Yamada K."/>
            <person name="Fujii Y."/>
            <person name="Ozaki K."/>
            <person name="Hirao M."/>
            <person name="Ohmori Y."/>
            <person name="Kawabata A."/>
            <person name="Hikiji T."/>
            <person name="Kobatake N."/>
            <person name="Inagaki H."/>
            <person name="Ikema Y."/>
            <person name="Okamoto S."/>
            <person name="Okitani R."/>
            <person name="Kawakami T."/>
            <person name="Noguchi S."/>
            <person name="Itoh T."/>
            <person name="Shigeta K."/>
            <person name="Senba T."/>
            <person name="Matsumura K."/>
            <person name="Nakajima Y."/>
            <person name="Mizuno T."/>
            <person name="Morinaga M."/>
            <person name="Sasaki M."/>
            <person name="Togashi T."/>
            <person name="Oyama M."/>
            <person name="Hata H."/>
            <person name="Watanabe M."/>
            <person name="Komatsu T."/>
            <person name="Mizushima-Sugano J."/>
            <person name="Satoh T."/>
            <person name="Shirai Y."/>
            <person name="Takahashi Y."/>
            <person name="Nakagawa K."/>
            <person name="Okumura K."/>
            <person name="Nagase T."/>
            <person name="Nomura N."/>
            <person name="Kikuchi H."/>
            <person name="Masuho Y."/>
            <person name="Yamashita R."/>
            <person name="Nakai K."/>
            <person name="Yada T."/>
            <person name="Nakamura Y."/>
            <person name="Ohara O."/>
            <person name="Isogai T."/>
            <person name="Sugano S."/>
        </authorList>
    </citation>
    <scope>NUCLEOTIDE SEQUENCE [LARGE SCALE MRNA] OF 195-363</scope>
</reference>
<protein>
    <recommendedName>
        <fullName>Putative uncharacterized protein FRMD6-AS1</fullName>
    </recommendedName>
    <alternativeName>
        <fullName>FRMD6 antisense RNA 1</fullName>
    </alternativeName>
    <alternativeName>
        <fullName>FRMD6 antisense gene protein 1</fullName>
    </alternativeName>
</protein>
<gene>
    <name type="primary">FRMD6-AS1</name>
    <name type="synonym">C14orf82</name>
</gene>
<accession>P0C7T7</accession>
<dbReference type="EMBL" id="AL079307">
    <property type="status" value="NOT_ANNOTATED_CDS"/>
    <property type="molecule type" value="Genomic_DNA"/>
</dbReference>
<dbReference type="EMBL" id="AL122125">
    <property type="status" value="NOT_ANNOTATED_CDS"/>
    <property type="molecule type" value="Genomic_DNA"/>
</dbReference>
<dbReference type="EMBL" id="AK022437">
    <property type="status" value="NOT_ANNOTATED_CDS"/>
    <property type="molecule type" value="mRNA"/>
</dbReference>
<dbReference type="GlyGen" id="P0C7T7">
    <property type="glycosylation" value="1 site, 1 O-linked glycan (1 site)"/>
</dbReference>
<dbReference type="iPTMnet" id="P0C7T7"/>
<dbReference type="BioMuta" id="HGNC:20129"/>
<dbReference type="DMDM" id="205831584"/>
<dbReference type="jPOST" id="P0C7T7"/>
<dbReference type="MassIVE" id="P0C7T7"/>
<dbReference type="ProteomicsDB" id="52366"/>
<dbReference type="AGR" id="HGNC:20129"/>
<dbReference type="GeneCards" id="FRMD6-AS1"/>
<dbReference type="HGNC" id="HGNC:20129">
    <property type="gene designation" value="FRMD6-AS1"/>
</dbReference>
<dbReference type="neXtProt" id="NX_P0C7T7"/>
<dbReference type="InParanoid" id="P0C7T7"/>
<dbReference type="PAN-GO" id="P0C7T7">
    <property type="GO annotations" value="0 GO annotations based on evolutionary models"/>
</dbReference>
<dbReference type="Pharos" id="P0C7T7">
    <property type="development level" value="Tdark"/>
</dbReference>
<dbReference type="Proteomes" id="UP000005640">
    <property type="component" value="Unplaced"/>
</dbReference>
<dbReference type="RNAct" id="P0C7T7">
    <property type="molecule type" value="protein"/>
</dbReference>
<comment type="caution">
    <text evidence="2">Product of a dubious CDS prediction.</text>
</comment>
<proteinExistence type="uncertain"/>